<protein>
    <recommendedName>
        <fullName evidence="1">RNA-binding protein MW0499</fullName>
    </recommendedName>
    <alternativeName>
        <fullName evidence="2">Putative ribosomal protein L7Ae-like</fullName>
    </alternativeName>
    <alternativeName>
        <fullName evidence="1">Ribosomal protein eL8-like</fullName>
    </alternativeName>
</protein>
<organism>
    <name type="scientific">Staphylococcus aureus (strain MW2)</name>
    <dbReference type="NCBI Taxonomy" id="196620"/>
    <lineage>
        <taxon>Bacteria</taxon>
        <taxon>Bacillati</taxon>
        <taxon>Bacillota</taxon>
        <taxon>Bacilli</taxon>
        <taxon>Bacillales</taxon>
        <taxon>Staphylococcaceae</taxon>
        <taxon>Staphylococcus</taxon>
    </lineage>
</organism>
<reference key="1">
    <citation type="journal article" date="2002" name="Lancet">
        <title>Genome and virulence determinants of high virulence community-acquired MRSA.</title>
        <authorList>
            <person name="Baba T."/>
            <person name="Takeuchi F."/>
            <person name="Kuroda M."/>
            <person name="Yuzawa H."/>
            <person name="Aoki K."/>
            <person name="Oguchi A."/>
            <person name="Nagai Y."/>
            <person name="Iwama N."/>
            <person name="Asano K."/>
            <person name="Naimi T."/>
            <person name="Kuroda H."/>
            <person name="Cui L."/>
            <person name="Yamamoto K."/>
            <person name="Hiramatsu K."/>
        </authorList>
    </citation>
    <scope>NUCLEOTIDE SEQUENCE [LARGE SCALE GENOMIC DNA]</scope>
    <source>
        <strain>MW2</strain>
    </source>
</reference>
<dbReference type="EMBL" id="BA000033">
    <property type="protein sequence ID" value="BAB94364.1"/>
    <property type="molecule type" value="Genomic_DNA"/>
</dbReference>
<dbReference type="RefSeq" id="WP_000031892.1">
    <property type="nucleotide sequence ID" value="NC_003923.1"/>
</dbReference>
<dbReference type="SMR" id="P0A0G5"/>
<dbReference type="KEGG" id="sam:MW0499"/>
<dbReference type="HOGENOM" id="CLU_168063_0_0_9"/>
<dbReference type="GO" id="GO:0003723">
    <property type="term" value="F:RNA binding"/>
    <property type="evidence" value="ECO:0007669"/>
    <property type="project" value="UniProtKB-UniRule"/>
</dbReference>
<dbReference type="Gene3D" id="3.30.1330.30">
    <property type="match status" value="1"/>
</dbReference>
<dbReference type="HAMAP" id="MF_00574">
    <property type="entry name" value="Ribosomal_eL8_Bact"/>
    <property type="match status" value="1"/>
</dbReference>
<dbReference type="InterPro" id="IPR029064">
    <property type="entry name" value="Ribosomal_eL30-like_sf"/>
</dbReference>
<dbReference type="InterPro" id="IPR004038">
    <property type="entry name" value="Ribosomal_eL8/eL30/eS12/Gad45"/>
</dbReference>
<dbReference type="InterPro" id="IPR023460">
    <property type="entry name" value="RNA_bf_YbxF-like"/>
</dbReference>
<dbReference type="NCBIfam" id="NF010123">
    <property type="entry name" value="PRK13600.1"/>
    <property type="match status" value="1"/>
</dbReference>
<dbReference type="Pfam" id="PF01248">
    <property type="entry name" value="Ribosomal_L7Ae"/>
    <property type="match status" value="1"/>
</dbReference>
<dbReference type="SUPFAM" id="SSF55315">
    <property type="entry name" value="L30e-like"/>
    <property type="match status" value="1"/>
</dbReference>
<comment type="similarity">
    <text evidence="1">Belongs to the eukaryotic ribosomal protein eL8 family.</text>
</comment>
<evidence type="ECO:0000255" key="1">
    <source>
        <dbReference type="HAMAP-Rule" id="MF_00574"/>
    </source>
</evidence>
<evidence type="ECO:0000305" key="2"/>
<proteinExistence type="inferred from homology"/>
<accession>P0A0G5</accession>
<accession>Q53602</accession>
<accession>Q99W63</accession>
<feature type="chain" id="PRO_0000136820" description="RNA-binding protein MW0499">
    <location>
        <begin position="1"/>
        <end position="84"/>
    </location>
</feature>
<sequence>MSKEKVARFNKQHFVVGLKETLKALKKDQVTSLIIAEDVEVYLMTRVLSQINQKNIPVSFFKSKHALGKHVGINVNATIVALIK</sequence>
<name>RXL7_STAAW</name>
<keyword id="KW-0694">RNA-binding</keyword>
<gene>
    <name type="ordered locus">MW0499</name>
</gene>